<proteinExistence type="inferred from homology"/>
<comment type="function">
    <text evidence="1">Catalyzes the isomerization between 2-isopropylmalate and 3-isopropylmalate, via the formation of 2-isopropylmaleate.</text>
</comment>
<comment type="catalytic activity">
    <reaction evidence="1">
        <text>(2R,3S)-3-isopropylmalate = (2S)-2-isopropylmalate</text>
        <dbReference type="Rhea" id="RHEA:32287"/>
        <dbReference type="ChEBI" id="CHEBI:1178"/>
        <dbReference type="ChEBI" id="CHEBI:35121"/>
        <dbReference type="EC" id="4.2.1.33"/>
    </reaction>
</comment>
<comment type="cofactor">
    <cofactor evidence="1">
        <name>[4Fe-4S] cluster</name>
        <dbReference type="ChEBI" id="CHEBI:49883"/>
    </cofactor>
    <text evidence="1">Binds 1 [4Fe-4S] cluster per subunit.</text>
</comment>
<comment type="pathway">
    <text evidence="1">Amino-acid biosynthesis; L-leucine biosynthesis; L-leucine from 3-methyl-2-oxobutanoate: step 2/4.</text>
</comment>
<comment type="subunit">
    <text evidence="1">Heterodimer of LeuC and LeuD.</text>
</comment>
<comment type="similarity">
    <text evidence="1">Belongs to the aconitase/IPM isomerase family. LeuC type 1 subfamily.</text>
</comment>
<keyword id="KW-0004">4Fe-4S</keyword>
<keyword id="KW-0028">Amino-acid biosynthesis</keyword>
<keyword id="KW-0100">Branched-chain amino acid biosynthesis</keyword>
<keyword id="KW-0408">Iron</keyword>
<keyword id="KW-0411">Iron-sulfur</keyword>
<keyword id="KW-0432">Leucine biosynthesis</keyword>
<keyword id="KW-0456">Lyase</keyword>
<keyword id="KW-0479">Metal-binding</keyword>
<reference key="1">
    <citation type="submission" date="2007-04" db="EMBL/GenBank/DDBJ databases">
        <title>Complete sequence of Roseiflexus sp. RS-1.</title>
        <authorList>
            <consortium name="US DOE Joint Genome Institute"/>
            <person name="Copeland A."/>
            <person name="Lucas S."/>
            <person name="Lapidus A."/>
            <person name="Barry K."/>
            <person name="Detter J.C."/>
            <person name="Glavina del Rio T."/>
            <person name="Hammon N."/>
            <person name="Israni S."/>
            <person name="Dalin E."/>
            <person name="Tice H."/>
            <person name="Pitluck S."/>
            <person name="Chertkov O."/>
            <person name="Brettin T."/>
            <person name="Bruce D."/>
            <person name="Han C."/>
            <person name="Schmutz J."/>
            <person name="Larimer F."/>
            <person name="Land M."/>
            <person name="Hauser L."/>
            <person name="Kyrpides N."/>
            <person name="Mikhailova N."/>
            <person name="Bryant D.A."/>
            <person name="Richardson P."/>
        </authorList>
    </citation>
    <scope>NUCLEOTIDE SEQUENCE [LARGE SCALE GENOMIC DNA]</scope>
    <source>
        <strain>RS-1</strain>
    </source>
</reference>
<sequence>MTPRTLFDKVWDAHIVRPQTAETPAVIYIDLHLIHEVTSPQAFTELRQRGLKVRRPDRTLATMDHSTPTTPRGADGIIPVVDAQAAAQLRQLEQNCAEFGIPLFALGSEYQGIVHVIGPEQGLTQPGMTIVCGDSHTSTHGAFGALAFGIGTSEVAHVLATQCLIQTRPKTMEVRVDGRLAPGVTAKDIILAIIARYGVGAGTGHVFEYTGETIRALSMEERMTICNMSIEGGARAGMIAPDDTTFEYIAGRPFAPKGKAWDEAVAYWRTLPTDEGAVYDRIITLDASQLTPMITYGTNPGMGMPIDGRIPTPEELPDPAARQALDKALRYMDLRPGQPLLGHKIDVVFLGSCTNSRISDLRMAARLLKGRKIADGVRMMVVPGSQQVKKQAEAEGLHEIFRAAGAEWREAGCSACLGMNDDKVPPGRYAVSTSNRNFEGRQGPGARTFLASPLTAVASAIEGAVADPRRYLGG</sequence>
<gene>
    <name evidence="1" type="primary">leuC</name>
    <name type="ordered locus">RoseRS_1961</name>
</gene>
<name>LEUC_ROSS1</name>
<accession>A5UUP5</accession>
<evidence type="ECO:0000255" key="1">
    <source>
        <dbReference type="HAMAP-Rule" id="MF_01026"/>
    </source>
</evidence>
<organism>
    <name type="scientific">Roseiflexus sp. (strain RS-1)</name>
    <dbReference type="NCBI Taxonomy" id="357808"/>
    <lineage>
        <taxon>Bacteria</taxon>
        <taxon>Bacillati</taxon>
        <taxon>Chloroflexota</taxon>
        <taxon>Chloroflexia</taxon>
        <taxon>Chloroflexales</taxon>
        <taxon>Roseiflexineae</taxon>
        <taxon>Roseiflexaceae</taxon>
        <taxon>Roseiflexus</taxon>
    </lineage>
</organism>
<protein>
    <recommendedName>
        <fullName evidence="1">3-isopropylmalate dehydratase large subunit</fullName>
        <ecNumber evidence="1">4.2.1.33</ecNumber>
    </recommendedName>
    <alternativeName>
        <fullName evidence="1">Alpha-IPM isomerase</fullName>
        <shortName evidence="1">IPMI</shortName>
    </alternativeName>
    <alternativeName>
        <fullName evidence="1">Isopropylmalate isomerase</fullName>
    </alternativeName>
</protein>
<dbReference type="EC" id="4.2.1.33" evidence="1"/>
<dbReference type="EMBL" id="CP000686">
    <property type="protein sequence ID" value="ABQ90348.1"/>
    <property type="molecule type" value="Genomic_DNA"/>
</dbReference>
<dbReference type="RefSeq" id="WP_011956694.1">
    <property type="nucleotide sequence ID" value="NC_009523.1"/>
</dbReference>
<dbReference type="SMR" id="A5UUP5"/>
<dbReference type="STRING" id="357808.RoseRS_1961"/>
<dbReference type="KEGG" id="rrs:RoseRS_1961"/>
<dbReference type="eggNOG" id="COG0065">
    <property type="taxonomic scope" value="Bacteria"/>
</dbReference>
<dbReference type="HOGENOM" id="CLU_006714_3_4_0"/>
<dbReference type="OrthoDB" id="9802769at2"/>
<dbReference type="UniPathway" id="UPA00048">
    <property type="reaction ID" value="UER00071"/>
</dbReference>
<dbReference type="Proteomes" id="UP000006554">
    <property type="component" value="Chromosome"/>
</dbReference>
<dbReference type="GO" id="GO:0003861">
    <property type="term" value="F:3-isopropylmalate dehydratase activity"/>
    <property type="evidence" value="ECO:0007669"/>
    <property type="project" value="UniProtKB-UniRule"/>
</dbReference>
<dbReference type="GO" id="GO:0051539">
    <property type="term" value="F:4 iron, 4 sulfur cluster binding"/>
    <property type="evidence" value="ECO:0007669"/>
    <property type="project" value="UniProtKB-KW"/>
</dbReference>
<dbReference type="GO" id="GO:0046872">
    <property type="term" value="F:metal ion binding"/>
    <property type="evidence" value="ECO:0007669"/>
    <property type="project" value="UniProtKB-KW"/>
</dbReference>
<dbReference type="GO" id="GO:0009098">
    <property type="term" value="P:L-leucine biosynthetic process"/>
    <property type="evidence" value="ECO:0007669"/>
    <property type="project" value="UniProtKB-UniRule"/>
</dbReference>
<dbReference type="CDD" id="cd01583">
    <property type="entry name" value="IPMI"/>
    <property type="match status" value="1"/>
</dbReference>
<dbReference type="Gene3D" id="3.30.499.10">
    <property type="entry name" value="Aconitase, domain 3"/>
    <property type="match status" value="2"/>
</dbReference>
<dbReference type="HAMAP" id="MF_01026">
    <property type="entry name" value="LeuC_type1"/>
    <property type="match status" value="1"/>
</dbReference>
<dbReference type="InterPro" id="IPR004430">
    <property type="entry name" value="3-IsopropMal_deHydase_lsu"/>
</dbReference>
<dbReference type="InterPro" id="IPR015931">
    <property type="entry name" value="Acnase/IPM_dHydase_lsu_aba_1/3"/>
</dbReference>
<dbReference type="InterPro" id="IPR001030">
    <property type="entry name" value="Acoase/IPM_deHydtase_lsu_aba"/>
</dbReference>
<dbReference type="InterPro" id="IPR018136">
    <property type="entry name" value="Aconitase_4Fe-4S_BS"/>
</dbReference>
<dbReference type="InterPro" id="IPR036008">
    <property type="entry name" value="Aconitase_4Fe-4S_dom"/>
</dbReference>
<dbReference type="InterPro" id="IPR050067">
    <property type="entry name" value="IPM_dehydratase_rel_enz"/>
</dbReference>
<dbReference type="InterPro" id="IPR033941">
    <property type="entry name" value="IPMI_cat"/>
</dbReference>
<dbReference type="NCBIfam" id="TIGR00170">
    <property type="entry name" value="leuC"/>
    <property type="match status" value="1"/>
</dbReference>
<dbReference type="NCBIfam" id="NF004016">
    <property type="entry name" value="PRK05478.1"/>
    <property type="match status" value="1"/>
</dbReference>
<dbReference type="NCBIfam" id="NF009116">
    <property type="entry name" value="PRK12466.1"/>
    <property type="match status" value="1"/>
</dbReference>
<dbReference type="PANTHER" id="PTHR43822:SF9">
    <property type="entry name" value="3-ISOPROPYLMALATE DEHYDRATASE"/>
    <property type="match status" value="1"/>
</dbReference>
<dbReference type="PANTHER" id="PTHR43822">
    <property type="entry name" value="HOMOACONITASE, MITOCHONDRIAL-RELATED"/>
    <property type="match status" value="1"/>
</dbReference>
<dbReference type="Pfam" id="PF00330">
    <property type="entry name" value="Aconitase"/>
    <property type="match status" value="1"/>
</dbReference>
<dbReference type="PRINTS" id="PR00415">
    <property type="entry name" value="ACONITASE"/>
</dbReference>
<dbReference type="SUPFAM" id="SSF53732">
    <property type="entry name" value="Aconitase iron-sulfur domain"/>
    <property type="match status" value="1"/>
</dbReference>
<dbReference type="PROSITE" id="PS00450">
    <property type="entry name" value="ACONITASE_1"/>
    <property type="match status" value="1"/>
</dbReference>
<dbReference type="PROSITE" id="PS01244">
    <property type="entry name" value="ACONITASE_2"/>
    <property type="match status" value="1"/>
</dbReference>
<feature type="chain" id="PRO_1000063599" description="3-isopropylmalate dehydratase large subunit">
    <location>
        <begin position="1"/>
        <end position="474"/>
    </location>
</feature>
<feature type="binding site" evidence="1">
    <location>
        <position position="353"/>
    </location>
    <ligand>
        <name>[4Fe-4S] cluster</name>
        <dbReference type="ChEBI" id="CHEBI:49883"/>
    </ligand>
</feature>
<feature type="binding site" evidence="1">
    <location>
        <position position="413"/>
    </location>
    <ligand>
        <name>[4Fe-4S] cluster</name>
        <dbReference type="ChEBI" id="CHEBI:49883"/>
    </ligand>
</feature>
<feature type="binding site" evidence="1">
    <location>
        <position position="416"/>
    </location>
    <ligand>
        <name>[4Fe-4S] cluster</name>
        <dbReference type="ChEBI" id="CHEBI:49883"/>
    </ligand>
</feature>